<feature type="chain" id="PRO_0000343697" description="D-ribitol-5-phosphate cytidylyltransferase">
    <location>
        <begin position="1"/>
        <end position="451"/>
    </location>
</feature>
<feature type="region of interest" description="Disordered" evidence="2">
    <location>
        <begin position="1"/>
        <end position="29"/>
    </location>
</feature>
<feature type="site" description="Transition state stabilizer" evidence="1">
    <location>
        <position position="59"/>
    </location>
</feature>
<feature type="site" description="Transition state stabilizer" evidence="1">
    <location>
        <position position="66"/>
    </location>
</feature>
<feature type="site" description="Positions substrate for the nucleophilic attack" evidence="1">
    <location>
        <position position="205"/>
    </location>
</feature>
<feature type="site" description="Positions substrate for the nucleophilic attack" evidence="1">
    <location>
        <position position="263"/>
    </location>
</feature>
<feature type="splice variant" id="VSP_044044" description="In isoform 2." evidence="15">
    <location>
        <begin position="179"/>
        <end position="228"/>
    </location>
</feature>
<feature type="sequence variant" id="VAR_078970" description="In MDDGC7." evidence="6">
    <original>A</original>
    <variation>T</variation>
    <location>
        <position position="53"/>
    </location>
</feature>
<feature type="sequence variant" id="VAR_071955" description="In MDDGC7; decreased alpha-dystroglycan glycosylation; dbSNP:rs587777797." evidence="7">
    <original>G</original>
    <variation>A</variation>
    <location>
        <position position="54"/>
    </location>
</feature>
<feature type="sequence variant" id="VAR_069740" description="In MDDGA7; dbSNP:rs397515398." evidence="3">
    <location>
        <position position="93"/>
    </location>
</feature>
<feature type="sequence variant" id="VAR_068101" description="In MDDGA7; dbSNP:rs387907162." evidence="4">
    <original>A</original>
    <variation>P</variation>
    <location>
        <position position="122"/>
    </location>
</feature>
<feature type="sequence variant" id="VAR_068102" description="In MDDGA7; also found in a patient with an atypical phenotype presenting with limb-girdle muscular dystrophy, ocular features and cerebellar involvement; dbSNP:rs752817129." evidence="4 6">
    <original>R</original>
    <variation>H</variation>
    <location>
        <position position="126"/>
    </location>
</feature>
<feature type="sequence variant" id="VAR_078948" description="In MDDGC7; atypical form presenting with congenital muscular dystrophy; dbSNP:rs369219851." evidence="6">
    <original>P</original>
    <variation>L</variation>
    <location>
        <position position="149"/>
    </location>
</feature>
<feature type="sequence variant" id="VAR_069741" description="In MDDGA7; dbSNP:rs397514547." evidence="5">
    <original>D</original>
    <variation>N</variation>
    <location>
        <position position="156"/>
    </location>
</feature>
<feature type="sequence variant" id="VAR_078949" description="In MDDGA7; dbSNP:rs566179705." evidence="8">
    <original>R</original>
    <variation>H</variation>
    <location>
        <position position="205"/>
    </location>
</feature>
<feature type="sequence variant" id="VAR_069742" description="In MDDGA7; dbSNP:rs397515408." evidence="5">
    <original>M</original>
    <variation>R</variation>
    <location>
        <position position="213"/>
    </location>
</feature>
<feature type="sequence variant" id="VAR_078950" description="In MDDGC7; atypical form presenting with congenital muscular dystrophy." evidence="6">
    <location>
        <begin position="215"/>
        <end position="451"/>
    </location>
</feature>
<feature type="sequence variant" id="VAR_068103" description="In MDDGA7; dbSNP:rs387907160." evidence="4">
    <original>A</original>
    <variation>D</variation>
    <location>
        <position position="216"/>
    </location>
</feature>
<feature type="sequence variant" id="VAR_078951" description="In MDDGC7; atypical form with learning difficulties; dbSNP:rs1289931198." evidence="6">
    <original>Y</original>
    <variation>C</variation>
    <location>
        <position position="226"/>
    </location>
</feature>
<feature type="sequence variant" id="VAR_069743" description="In MDDGA7; dbSNP:rs1282788711." evidence="5">
    <original>Y</original>
    <variation>H</variation>
    <location>
        <position position="226"/>
    </location>
</feature>
<feature type="sequence variant" id="VAR_069744" description="In MDDGA7; dbSNP:rs397515409." evidence="5">
    <original>T</original>
    <variation>I</variation>
    <location>
        <position position="238"/>
    </location>
</feature>
<feature type="sequence variant" id="VAR_071956" description="In MDDGC7; decreased alpha-dystroglycan glycosylation; dbSNP:rs587777798." evidence="6 7 12">
    <location>
        <position position="372"/>
    </location>
</feature>
<feature type="sequence variant" id="VAR_078952" description="In MDDGC7." evidence="6">
    <location>
        <begin position="395"/>
        <end position="451"/>
    </location>
</feature>
<feature type="strand" evidence="17">
    <location>
        <begin position="45"/>
        <end position="52"/>
    </location>
</feature>
<feature type="helix" evidence="17">
    <location>
        <begin position="76"/>
        <end position="85"/>
    </location>
</feature>
<feature type="strand" evidence="17">
    <location>
        <begin position="90"/>
        <end position="97"/>
    </location>
</feature>
<feature type="helix" evidence="17">
    <location>
        <begin position="99"/>
        <end position="101"/>
    </location>
</feature>
<feature type="helix" evidence="17">
    <location>
        <begin position="102"/>
        <end position="112"/>
    </location>
</feature>
<feature type="strand" evidence="17">
    <location>
        <begin position="116"/>
        <end position="121"/>
    </location>
</feature>
<feature type="helix" evidence="17">
    <location>
        <begin position="126"/>
        <end position="137"/>
    </location>
</feature>
<feature type="strand" evidence="17">
    <location>
        <begin position="150"/>
        <end position="154"/>
    </location>
</feature>
<feature type="helix" evidence="17">
    <location>
        <begin position="164"/>
        <end position="177"/>
    </location>
</feature>
<feature type="strand" evidence="17">
    <location>
        <begin position="178"/>
        <end position="185"/>
    </location>
</feature>
<feature type="strand" evidence="17">
    <location>
        <begin position="191"/>
        <end position="193"/>
    </location>
</feature>
<feature type="strand" evidence="17">
    <location>
        <begin position="199"/>
        <end position="202"/>
    </location>
</feature>
<feature type="helix" evidence="17">
    <location>
        <begin position="205"/>
        <end position="207"/>
    </location>
</feature>
<feature type="strand" evidence="17">
    <location>
        <begin position="209"/>
        <end position="218"/>
    </location>
</feature>
<feature type="helix" evidence="17">
    <location>
        <begin position="219"/>
        <end position="228"/>
    </location>
</feature>
<feature type="helix" evidence="17">
    <location>
        <begin position="231"/>
        <end position="236"/>
    </location>
</feature>
<feature type="helix" evidence="17">
    <location>
        <begin position="240"/>
        <end position="248"/>
    </location>
</feature>
<feature type="strand" evidence="17">
    <location>
        <begin position="253"/>
        <end position="256"/>
    </location>
</feature>
<feature type="helix" evidence="17">
    <location>
        <begin position="259"/>
        <end position="261"/>
    </location>
</feature>
<feature type="helix" evidence="17">
    <location>
        <begin position="267"/>
        <end position="280"/>
    </location>
</feature>
<feature type="strand" evidence="17">
    <location>
        <begin position="283"/>
        <end position="289"/>
    </location>
</feature>
<feature type="helix" evidence="17">
    <location>
        <begin position="293"/>
        <end position="309"/>
    </location>
</feature>
<feature type="strand" evidence="17">
    <location>
        <begin position="314"/>
        <end position="319"/>
    </location>
</feature>
<feature type="strand" evidence="17">
    <location>
        <begin position="337"/>
        <end position="344"/>
    </location>
</feature>
<feature type="helix" evidence="17">
    <location>
        <begin position="349"/>
        <end position="360"/>
    </location>
</feature>
<feature type="helix" evidence="17">
    <location>
        <begin position="363"/>
        <end position="366"/>
    </location>
</feature>
<feature type="strand" evidence="17">
    <location>
        <begin position="369"/>
        <end position="377"/>
    </location>
</feature>
<feature type="strand" evidence="17">
    <location>
        <begin position="380"/>
        <end position="382"/>
    </location>
</feature>
<feature type="helix" evidence="17">
    <location>
        <begin position="385"/>
        <end position="391"/>
    </location>
</feature>
<feature type="helix" evidence="17">
    <location>
        <begin position="394"/>
        <end position="402"/>
    </location>
</feature>
<feature type="turn" evidence="17">
    <location>
        <begin position="403"/>
        <end position="405"/>
    </location>
</feature>
<feature type="strand" evidence="17">
    <location>
        <begin position="406"/>
        <end position="414"/>
    </location>
</feature>
<feature type="helix" evidence="17">
    <location>
        <begin position="419"/>
        <end position="439"/>
    </location>
</feature>
<feature type="helix" evidence="17">
    <location>
        <begin position="442"/>
        <end position="444"/>
    </location>
</feature>
<feature type="strand" evidence="17">
    <location>
        <begin position="448"/>
        <end position="450"/>
    </location>
</feature>
<dbReference type="EC" id="2.7.7.40" evidence="9 10 11"/>
<dbReference type="EMBL" id="AC004741">
    <property type="status" value="NOT_ANNOTATED_CDS"/>
    <property type="molecule type" value="Genomic_DNA"/>
</dbReference>
<dbReference type="EMBL" id="AC006035">
    <property type="status" value="NOT_ANNOTATED_CDS"/>
    <property type="molecule type" value="Genomic_DNA"/>
</dbReference>
<dbReference type="EMBL" id="AC073629">
    <property type="status" value="NOT_ANNOTATED_CDS"/>
    <property type="molecule type" value="Genomic_DNA"/>
</dbReference>
<dbReference type="EMBL" id="AC079155">
    <property type="status" value="NOT_ANNOTATED_CDS"/>
    <property type="molecule type" value="Genomic_DNA"/>
</dbReference>
<dbReference type="EMBL" id="CH236948">
    <property type="protein sequence ID" value="EAL24288.1"/>
    <property type="status" value="ALT_SEQ"/>
    <property type="molecule type" value="Genomic_DNA"/>
</dbReference>
<dbReference type="EMBL" id="CH471073">
    <property type="protein sequence ID" value="EAW93668.1"/>
    <property type="molecule type" value="Genomic_DNA"/>
</dbReference>
<dbReference type="RefSeq" id="NP_001094887.1">
    <molecule id="A4D126-2"/>
    <property type="nucleotide sequence ID" value="NM_001101417.4"/>
</dbReference>
<dbReference type="RefSeq" id="NP_001094896.1">
    <molecule id="A4D126-1"/>
    <property type="nucleotide sequence ID" value="NM_001101426.4"/>
</dbReference>
<dbReference type="PDB" id="4CVH">
    <property type="method" value="X-ray"/>
    <property type="resolution" value="2.39 A"/>
    <property type="chains" value="A=43-451"/>
</dbReference>
<dbReference type="PDBsum" id="4CVH"/>
<dbReference type="SMR" id="A4D126"/>
<dbReference type="BioGRID" id="610311">
    <property type="interactions" value="1"/>
</dbReference>
<dbReference type="FunCoup" id="A4D126">
    <property type="interactions" value="421"/>
</dbReference>
<dbReference type="IntAct" id="A4D126">
    <property type="interactions" value="2"/>
</dbReference>
<dbReference type="STRING" id="9606.ENSP00000385478"/>
<dbReference type="iPTMnet" id="A4D126"/>
<dbReference type="PhosphoSitePlus" id="A4D126"/>
<dbReference type="BioMuta" id="ISPD"/>
<dbReference type="jPOST" id="A4D126"/>
<dbReference type="MassIVE" id="A4D126"/>
<dbReference type="PaxDb" id="9606-ENSP00000385478"/>
<dbReference type="PeptideAtlas" id="A4D126"/>
<dbReference type="ProteomicsDB" id="602">
    <molecule id="A4D126-1"/>
</dbReference>
<dbReference type="ProteomicsDB" id="603">
    <molecule id="A4D126-2"/>
</dbReference>
<dbReference type="Pumba" id="A4D126"/>
<dbReference type="Antibodypedia" id="43951">
    <property type="antibodies" value="100 antibodies from 15 providers"/>
</dbReference>
<dbReference type="DNASU" id="729920"/>
<dbReference type="Ensembl" id="ENST00000399310.3">
    <molecule id="A4D126-2"/>
    <property type="protein sequence ID" value="ENSP00000382249.3"/>
    <property type="gene ID" value="ENSG00000214960.11"/>
</dbReference>
<dbReference type="Ensembl" id="ENST00000407010.7">
    <molecule id="A4D126-1"/>
    <property type="protein sequence ID" value="ENSP00000385478.2"/>
    <property type="gene ID" value="ENSG00000214960.11"/>
</dbReference>
<dbReference type="GeneID" id="729920"/>
<dbReference type="KEGG" id="hsa:729920"/>
<dbReference type="MANE-Select" id="ENST00000407010.7">
    <property type="protein sequence ID" value="ENSP00000385478.2"/>
    <property type="RefSeq nucleotide sequence ID" value="NM_001101426.4"/>
    <property type="RefSeq protein sequence ID" value="NP_001094896.1"/>
</dbReference>
<dbReference type="UCSC" id="uc010ktx.2">
    <molecule id="A4D126-1"/>
    <property type="organism name" value="human"/>
</dbReference>
<dbReference type="AGR" id="HGNC:37276"/>
<dbReference type="CTD" id="729920"/>
<dbReference type="DisGeNET" id="729920"/>
<dbReference type="GeneCards" id="CRPPA"/>
<dbReference type="HGNC" id="HGNC:37276">
    <property type="gene designation" value="CRPPA"/>
</dbReference>
<dbReference type="HPA" id="ENSG00000214960">
    <property type="expression patterns" value="Tissue enhanced (choroid)"/>
</dbReference>
<dbReference type="MalaCards" id="CRPPA"/>
<dbReference type="MIM" id="614631">
    <property type="type" value="gene"/>
</dbReference>
<dbReference type="MIM" id="614643">
    <property type="type" value="phenotype"/>
</dbReference>
<dbReference type="MIM" id="616052">
    <property type="type" value="phenotype"/>
</dbReference>
<dbReference type="neXtProt" id="NX_A4D126"/>
<dbReference type="OpenTargets" id="ENSG00000214960"/>
<dbReference type="Orphanet" id="370980">
    <property type="disease" value="Congenital muscular dystrophy without intellectual disability"/>
</dbReference>
<dbReference type="Orphanet" id="352479">
    <property type="disease" value="ISPD-related limb-girdle muscular dystrophy R20"/>
</dbReference>
<dbReference type="Orphanet" id="588">
    <property type="disease" value="Muscle-eye-brain disease"/>
</dbReference>
<dbReference type="Orphanet" id="899">
    <property type="disease" value="Walker-Warburg syndrome"/>
</dbReference>
<dbReference type="PharmGKB" id="PA165618128"/>
<dbReference type="VEuPathDB" id="HostDB:ENSG00000214960"/>
<dbReference type="eggNOG" id="ENOG502QUUE">
    <property type="taxonomic scope" value="Eukaryota"/>
</dbReference>
<dbReference type="GeneTree" id="ENSGT00390000006412"/>
<dbReference type="HOGENOM" id="CLU_033636_0_0_1"/>
<dbReference type="InParanoid" id="A4D126"/>
<dbReference type="OMA" id="LKEWNFI"/>
<dbReference type="OrthoDB" id="414267at2759"/>
<dbReference type="PAN-GO" id="A4D126">
    <property type="GO annotations" value="3 GO annotations based on evolutionary models"/>
</dbReference>
<dbReference type="PhylomeDB" id="A4D126"/>
<dbReference type="TreeFam" id="TF328415"/>
<dbReference type="BioCyc" id="MetaCyc:MONOMER66-43822"/>
<dbReference type="BRENDA" id="2.7.7.40">
    <property type="organism ID" value="2681"/>
</dbReference>
<dbReference type="PathwayCommons" id="A4D126"/>
<dbReference type="SignaLink" id="A4D126"/>
<dbReference type="UniPathway" id="UPA00378"/>
<dbReference type="BioGRID-ORCS" id="729920">
    <property type="hits" value="6 hits in 300 CRISPR screens"/>
</dbReference>
<dbReference type="ChiTaRS" id="ISPD">
    <property type="organism name" value="human"/>
</dbReference>
<dbReference type="EvolutionaryTrace" id="A4D126"/>
<dbReference type="GenomeRNAi" id="729920"/>
<dbReference type="Pharos" id="A4D126">
    <property type="development level" value="Tbio"/>
</dbReference>
<dbReference type="PRO" id="PR:A4D126"/>
<dbReference type="Proteomes" id="UP000005640">
    <property type="component" value="Chromosome 7"/>
</dbReference>
<dbReference type="RNAct" id="A4D126">
    <property type="molecule type" value="protein"/>
</dbReference>
<dbReference type="Bgee" id="ENSG00000214960">
    <property type="expression patterns" value="Expressed in corpus callosum and 112 other cell types or tissues"/>
</dbReference>
<dbReference type="ExpressionAtlas" id="A4D126">
    <property type="expression patterns" value="baseline and differential"/>
</dbReference>
<dbReference type="GO" id="GO:0005829">
    <property type="term" value="C:cytosol"/>
    <property type="evidence" value="ECO:0000314"/>
    <property type="project" value="UniProtKB"/>
</dbReference>
<dbReference type="GO" id="GO:0070567">
    <property type="term" value="F:cytidylyltransferase activity"/>
    <property type="evidence" value="ECO:0000314"/>
    <property type="project" value="UniProtKB"/>
</dbReference>
<dbReference type="GO" id="GO:0047349">
    <property type="term" value="F:D-ribitol-5-phosphate cytidylyltransferase activity"/>
    <property type="evidence" value="ECO:0000314"/>
    <property type="project" value="UniProtKB"/>
</dbReference>
<dbReference type="GO" id="GO:0042803">
    <property type="term" value="F:protein homodimerization activity"/>
    <property type="evidence" value="ECO:0000314"/>
    <property type="project" value="UniProtKB"/>
</dbReference>
<dbReference type="GO" id="GO:0007411">
    <property type="term" value="P:axon guidance"/>
    <property type="evidence" value="ECO:0007669"/>
    <property type="project" value="Ensembl"/>
</dbReference>
<dbReference type="GO" id="GO:0008299">
    <property type="term" value="P:isoprenoid biosynthetic process"/>
    <property type="evidence" value="ECO:0007669"/>
    <property type="project" value="InterPro"/>
</dbReference>
<dbReference type="GO" id="GO:0035269">
    <property type="term" value="P:protein O-linked mannosylation"/>
    <property type="evidence" value="ECO:0000315"/>
    <property type="project" value="UniProtKB"/>
</dbReference>
<dbReference type="CDD" id="cd02516">
    <property type="entry name" value="CDP-ME_synthetase"/>
    <property type="match status" value="1"/>
</dbReference>
<dbReference type="FunFam" id="3.90.550.10:FF:000080">
    <property type="entry name" value="D-ribitol-5-phosphate cytidylyltransferase isoform X1"/>
    <property type="match status" value="1"/>
</dbReference>
<dbReference type="Gene3D" id="3.90.550.10">
    <property type="entry name" value="Spore Coat Polysaccharide Biosynthesis Protein SpsA, Chain A"/>
    <property type="match status" value="1"/>
</dbReference>
<dbReference type="InterPro" id="IPR034683">
    <property type="entry name" value="IspD/TarI"/>
</dbReference>
<dbReference type="InterPro" id="IPR040635">
    <property type="entry name" value="ISPD_C"/>
</dbReference>
<dbReference type="InterPro" id="IPR018294">
    <property type="entry name" value="ISPD_synthase_CS"/>
</dbReference>
<dbReference type="InterPro" id="IPR029044">
    <property type="entry name" value="Nucleotide-diphossugar_trans"/>
</dbReference>
<dbReference type="PANTHER" id="PTHR43015">
    <property type="entry name" value="D-RIBITOL-5-PHOSPHATE CYTIDYLYLTRANSFERASE"/>
    <property type="match status" value="1"/>
</dbReference>
<dbReference type="PANTHER" id="PTHR43015:SF1">
    <property type="entry name" value="D-RIBITOL-5-PHOSPHATE CYTIDYLYLTRANSFERASE"/>
    <property type="match status" value="1"/>
</dbReference>
<dbReference type="Pfam" id="PF01128">
    <property type="entry name" value="IspD"/>
    <property type="match status" value="1"/>
</dbReference>
<dbReference type="Pfam" id="PF18706">
    <property type="entry name" value="ISPD_C"/>
    <property type="match status" value="1"/>
</dbReference>
<dbReference type="SUPFAM" id="SSF53448">
    <property type="entry name" value="Nucleotide-diphospho-sugar transferases"/>
    <property type="match status" value="1"/>
</dbReference>
<dbReference type="PROSITE" id="PS01295">
    <property type="entry name" value="ISPD"/>
    <property type="match status" value="1"/>
</dbReference>
<sequence>MEAGPPGSARPAEPGPCLSGQRGADHTASASLQSVAGTEPGRHPQAVAAVLPAGGCGERMGVPTPKQFCPILERPLISYTLQALERVCWIKDIVVAVTGENMEVMKSIIQKYQHKRISLVEAGVTRHRSIFNGLKALAEDQINSKLSKPEVVIIHDAVRPFVEEGVLLKVVTAAKEHGAAGAIRPLVSTVVSPSADGCLDYSLERARHRASEMPQAFLFDVIYEAYQQCSDYDLEFGTECLQLALKYCCTKAKLVEGSPDLWKVTYKRDLYAAESIIKERISQEICVVMDTEEDNKHVGHLLEEVLKSELNHVKVTSEALGHAGRHLQQIILDQCYNFVCVNVTTSDFQETQKLLSMLEESSLCILYPVVVVSVHFLDFKLVPPSQKMENLMQIREFAKEVKERNILLYGLLISYPQDDQKLQESLRQGAIIIASLIKERNSGLIGQLLIA</sequence>
<accession>A4D126</accession>
<accession>A8MU35</accession>
<accession>H9KVB2</accession>
<protein>
    <recommendedName>
        <fullName evidence="15">D-ribitol-5-phosphate cytidylyltransferase</fullName>
        <ecNumber evidence="9 10 11">2.7.7.40</ecNumber>
    </recommendedName>
    <alternativeName>
        <fullName>2-C-methyl-D-erythritol 4-phosphate cytidylyltransferase-like protein</fullName>
    </alternativeName>
    <alternativeName>
        <fullName evidence="16">Isoprenoid synthase domain-containing protein</fullName>
        <shortName evidence="14">hISPD</shortName>
    </alternativeName>
</protein>
<organism>
    <name type="scientific">Homo sapiens</name>
    <name type="common">Human</name>
    <dbReference type="NCBI Taxonomy" id="9606"/>
    <lineage>
        <taxon>Eukaryota</taxon>
        <taxon>Metazoa</taxon>
        <taxon>Chordata</taxon>
        <taxon>Craniata</taxon>
        <taxon>Vertebrata</taxon>
        <taxon>Euteleostomi</taxon>
        <taxon>Mammalia</taxon>
        <taxon>Eutheria</taxon>
        <taxon>Euarchontoglires</taxon>
        <taxon>Primates</taxon>
        <taxon>Haplorrhini</taxon>
        <taxon>Catarrhini</taxon>
        <taxon>Hominidae</taxon>
        <taxon>Homo</taxon>
    </lineage>
</organism>
<name>ISPD_HUMAN</name>
<evidence type="ECO:0000250" key="1">
    <source>
        <dbReference type="UniProtKB" id="Q46893"/>
    </source>
</evidence>
<evidence type="ECO:0000256" key="2">
    <source>
        <dbReference type="SAM" id="MobiDB-lite"/>
    </source>
</evidence>
<evidence type="ECO:0000269" key="3">
    <source>
    </source>
</evidence>
<evidence type="ECO:0000269" key="4">
    <source>
    </source>
</evidence>
<evidence type="ECO:0000269" key="5">
    <source>
    </source>
</evidence>
<evidence type="ECO:0000269" key="6">
    <source>
    </source>
</evidence>
<evidence type="ECO:0000269" key="7">
    <source>
    </source>
</evidence>
<evidence type="ECO:0000269" key="8">
    <source>
    </source>
</evidence>
<evidence type="ECO:0000269" key="9">
    <source>
    </source>
</evidence>
<evidence type="ECO:0000269" key="10">
    <source>
    </source>
</evidence>
<evidence type="ECO:0000269" key="11">
    <source>
    </source>
</evidence>
<evidence type="ECO:0000269" key="12">
    <source>
    </source>
</evidence>
<evidence type="ECO:0000269" key="13">
    <source>
    </source>
</evidence>
<evidence type="ECO:0000303" key="14">
    <source>
    </source>
</evidence>
<evidence type="ECO:0000305" key="15"/>
<evidence type="ECO:0000312" key="16">
    <source>
        <dbReference type="HGNC" id="HGNC:37276"/>
    </source>
</evidence>
<evidence type="ECO:0007829" key="17">
    <source>
        <dbReference type="PDB" id="4CVH"/>
    </source>
</evidence>
<reference key="1">
    <citation type="journal article" date="2003" name="Nature">
        <title>The DNA sequence of human chromosome 7.</title>
        <authorList>
            <person name="Hillier L.W."/>
            <person name="Fulton R.S."/>
            <person name="Fulton L.A."/>
            <person name="Graves T.A."/>
            <person name="Pepin K.H."/>
            <person name="Wagner-McPherson C."/>
            <person name="Layman D."/>
            <person name="Maas J."/>
            <person name="Jaeger S."/>
            <person name="Walker R."/>
            <person name="Wylie K."/>
            <person name="Sekhon M."/>
            <person name="Becker M.C."/>
            <person name="O'Laughlin M.D."/>
            <person name="Schaller M.E."/>
            <person name="Fewell G.A."/>
            <person name="Delehaunty K.D."/>
            <person name="Miner T.L."/>
            <person name="Nash W.E."/>
            <person name="Cordes M."/>
            <person name="Du H."/>
            <person name="Sun H."/>
            <person name="Edwards J."/>
            <person name="Bradshaw-Cordum H."/>
            <person name="Ali J."/>
            <person name="Andrews S."/>
            <person name="Isak A."/>
            <person name="Vanbrunt A."/>
            <person name="Nguyen C."/>
            <person name="Du F."/>
            <person name="Lamar B."/>
            <person name="Courtney L."/>
            <person name="Kalicki J."/>
            <person name="Ozersky P."/>
            <person name="Bielicki L."/>
            <person name="Scott K."/>
            <person name="Holmes A."/>
            <person name="Harkins R."/>
            <person name="Harris A."/>
            <person name="Strong C.M."/>
            <person name="Hou S."/>
            <person name="Tomlinson C."/>
            <person name="Dauphin-Kohlberg S."/>
            <person name="Kozlowicz-Reilly A."/>
            <person name="Leonard S."/>
            <person name="Rohlfing T."/>
            <person name="Rock S.M."/>
            <person name="Tin-Wollam A.-M."/>
            <person name="Abbott A."/>
            <person name="Minx P."/>
            <person name="Maupin R."/>
            <person name="Strowmatt C."/>
            <person name="Latreille P."/>
            <person name="Miller N."/>
            <person name="Johnson D."/>
            <person name="Murray J."/>
            <person name="Woessner J.P."/>
            <person name="Wendl M.C."/>
            <person name="Yang S.-P."/>
            <person name="Schultz B.R."/>
            <person name="Wallis J.W."/>
            <person name="Spieth J."/>
            <person name="Bieri T.A."/>
            <person name="Nelson J.O."/>
            <person name="Berkowicz N."/>
            <person name="Wohldmann P.E."/>
            <person name="Cook L.L."/>
            <person name="Hickenbotham M.T."/>
            <person name="Eldred J."/>
            <person name="Williams D."/>
            <person name="Bedell J.A."/>
            <person name="Mardis E.R."/>
            <person name="Clifton S.W."/>
            <person name="Chissoe S.L."/>
            <person name="Marra M.A."/>
            <person name="Raymond C."/>
            <person name="Haugen E."/>
            <person name="Gillett W."/>
            <person name="Zhou Y."/>
            <person name="James R."/>
            <person name="Phelps K."/>
            <person name="Iadanoto S."/>
            <person name="Bubb K."/>
            <person name="Simms E."/>
            <person name="Levy R."/>
            <person name="Clendenning J."/>
            <person name="Kaul R."/>
            <person name="Kent W.J."/>
            <person name="Furey T.S."/>
            <person name="Baertsch R.A."/>
            <person name="Brent M.R."/>
            <person name="Keibler E."/>
            <person name="Flicek P."/>
            <person name="Bork P."/>
            <person name="Suyama M."/>
            <person name="Bailey J.A."/>
            <person name="Portnoy M.E."/>
            <person name="Torrents D."/>
            <person name="Chinwalla A.T."/>
            <person name="Gish W.R."/>
            <person name="Eddy S.R."/>
            <person name="McPherson J.D."/>
            <person name="Olson M.V."/>
            <person name="Eichler E.E."/>
            <person name="Green E.D."/>
            <person name="Waterston R.H."/>
            <person name="Wilson R.K."/>
        </authorList>
    </citation>
    <scope>NUCLEOTIDE SEQUENCE [LARGE SCALE GENOMIC DNA]</scope>
</reference>
<reference key="2">
    <citation type="journal article" date="2003" name="Science">
        <title>Human chromosome 7: DNA sequence and biology.</title>
        <authorList>
            <person name="Scherer S.W."/>
            <person name="Cheung J."/>
            <person name="MacDonald J.R."/>
            <person name="Osborne L.R."/>
            <person name="Nakabayashi K."/>
            <person name="Herbrick J.-A."/>
            <person name="Carson A.R."/>
            <person name="Parker-Katiraee L."/>
            <person name="Skaug J."/>
            <person name="Khaja R."/>
            <person name="Zhang J."/>
            <person name="Hudek A.K."/>
            <person name="Li M."/>
            <person name="Haddad M."/>
            <person name="Duggan G.E."/>
            <person name="Fernandez B.A."/>
            <person name="Kanematsu E."/>
            <person name="Gentles S."/>
            <person name="Christopoulos C.C."/>
            <person name="Choufani S."/>
            <person name="Kwasnicka D."/>
            <person name="Zheng X.H."/>
            <person name="Lai Z."/>
            <person name="Nusskern D.R."/>
            <person name="Zhang Q."/>
            <person name="Gu Z."/>
            <person name="Lu F."/>
            <person name="Zeesman S."/>
            <person name="Nowaczyk M.J."/>
            <person name="Teshima I."/>
            <person name="Chitayat D."/>
            <person name="Shuman C."/>
            <person name="Weksberg R."/>
            <person name="Zackai E.H."/>
            <person name="Grebe T.A."/>
            <person name="Cox S.R."/>
            <person name="Kirkpatrick S.J."/>
            <person name="Rahman N."/>
            <person name="Friedman J.M."/>
            <person name="Heng H.H.Q."/>
            <person name="Pelicci P.G."/>
            <person name="Lo-Coco F."/>
            <person name="Belloni E."/>
            <person name="Shaffer L.G."/>
            <person name="Pober B."/>
            <person name="Morton C.C."/>
            <person name="Gusella J.F."/>
            <person name="Bruns G.A.P."/>
            <person name="Korf B.R."/>
            <person name="Quade B.J."/>
            <person name="Ligon A.H."/>
            <person name="Ferguson H."/>
            <person name="Higgins A.W."/>
            <person name="Leach N.T."/>
            <person name="Herrick S.R."/>
            <person name="Lemyre E."/>
            <person name="Farra C.G."/>
            <person name="Kim H.-G."/>
            <person name="Summers A.M."/>
            <person name="Gripp K.W."/>
            <person name="Roberts W."/>
            <person name="Szatmari P."/>
            <person name="Winsor E.J.T."/>
            <person name="Grzeschik K.-H."/>
            <person name="Teebi A."/>
            <person name="Minassian B.A."/>
            <person name="Kere J."/>
            <person name="Armengol L."/>
            <person name="Pujana M.A."/>
            <person name="Estivill X."/>
            <person name="Wilson M.D."/>
            <person name="Koop B.F."/>
            <person name="Tosi S."/>
            <person name="Moore G.E."/>
            <person name="Boright A.P."/>
            <person name="Zlotorynski E."/>
            <person name="Kerem B."/>
            <person name="Kroisel P.M."/>
            <person name="Petek E."/>
            <person name="Oscier D.G."/>
            <person name="Mould S.J."/>
            <person name="Doehner H."/>
            <person name="Doehner K."/>
            <person name="Rommens J.M."/>
            <person name="Vincent J.B."/>
            <person name="Venter J.C."/>
            <person name="Li P.W."/>
            <person name="Mural R.J."/>
            <person name="Adams M.D."/>
            <person name="Tsui L.-C."/>
        </authorList>
    </citation>
    <scope>NUCLEOTIDE SEQUENCE [LARGE SCALE GENOMIC DNA]</scope>
</reference>
<reference key="3">
    <citation type="journal article" date="2012" name="Nat. Genet.">
        <title>ISPD loss-of-function mutations disrupt dystroglycan O-mannosylation and cause Walker-Warburg syndrome.</title>
        <authorList>
            <person name="Willer T."/>
            <person name="Lee H."/>
            <person name="Lommel M."/>
            <person name="Yoshida-Moriguchi T."/>
            <person name="de Bernabe D.B."/>
            <person name="Venzke D."/>
            <person name="Cirak S."/>
            <person name="Schachter H."/>
            <person name="Vajsar J."/>
            <person name="Voit T."/>
            <person name="Muntoni F."/>
            <person name="Loder A.S."/>
            <person name="Dobyns W.B."/>
            <person name="Winder T.L."/>
            <person name="Strahl S."/>
            <person name="Mathews K.D."/>
            <person name="Nelson S.F."/>
            <person name="Moore S.A."/>
            <person name="Campbell K.P."/>
        </authorList>
    </citation>
    <scope>FUNCTION</scope>
    <scope>VARIANT MDDGA7 ILE-93 DEL</scope>
    <scope>TISSUE SPECIFICITY</scope>
</reference>
<reference key="4">
    <citation type="journal article" date="2016" name="Cell Rep.">
        <title>Identification of a Post-translational Modification with Ribitol-Phosphate and Its Defect in Muscular Dystrophy.</title>
        <authorList>
            <person name="Kanagawa M."/>
            <person name="Kobayashi K."/>
            <person name="Tajiri M."/>
            <person name="Manya H."/>
            <person name="Kuga A."/>
            <person name="Yamaguchi Y."/>
            <person name="Akasaka-Manya K."/>
            <person name="Furukawa J.I."/>
            <person name="Mizuno M."/>
            <person name="Kawakami H."/>
            <person name="Shinohara Y."/>
            <person name="Wada Y."/>
            <person name="Endo T."/>
            <person name="Toda T."/>
        </authorList>
    </citation>
    <scope>FUNCTION</scope>
    <scope>CATALYTIC ACTIVITY</scope>
    <scope>PATHWAY</scope>
</reference>
<reference key="5">
    <citation type="journal article" date="2016" name="Elife">
        <title>The functional O-mannose glycan on alpha-dystroglycan contains a phospho-ribitol primed for matriglycan addition.</title>
        <authorList>
            <person name="Praissman J.L."/>
            <person name="Willer T."/>
            <person name="Sheikh M.O."/>
            <person name="Toi A."/>
            <person name="Chitayat D."/>
            <person name="Lin Y.Y."/>
            <person name="Lee H."/>
            <person name="Stalnaker S.H."/>
            <person name="Wang S."/>
            <person name="Prabhakar P.K."/>
            <person name="Nelson S.F."/>
            <person name="Stemple D.L."/>
            <person name="Moore S.A."/>
            <person name="Moremen K.W."/>
            <person name="Campbell K.P."/>
            <person name="Wells L."/>
        </authorList>
    </citation>
    <scope>FUNCTION</scope>
    <scope>CATALYTIC ACTIVITY</scope>
    <scope>PATHWAY</scope>
</reference>
<reference key="6">
    <citation type="journal article" date="2016" name="Mol. Cell. Proteomics">
        <title>Direct mapping of additional modifications on phosphorylated O-glycans of alpha-dystroglycan by mass spectrometry analysis in conjunction with knocking out of causative genes for dystroglycanopathy.</title>
        <authorList>
            <person name="Yagi H."/>
            <person name="Kuo C.W."/>
            <person name="Obayashi T."/>
            <person name="Ninagawa S."/>
            <person name="Khoo K.H."/>
            <person name="Kato K."/>
        </authorList>
    </citation>
    <scope>FUNCTION</scope>
</reference>
<reference key="7">
    <citation type="journal article" date="2015" name="Chem. Biol.">
        <title>Human ISPD is a cytidyltransferase required for dystroglycan O-mannosylation.</title>
        <authorList>
            <person name="Riemersma M."/>
            <person name="Froese D.S."/>
            <person name="van Tol W."/>
            <person name="Engelke U.F."/>
            <person name="Kopec J."/>
            <person name="van Scherpenzeel M."/>
            <person name="Ashikov A."/>
            <person name="Krojer T."/>
            <person name="von Delft F."/>
            <person name="Tessari M."/>
            <person name="Buczkowska A."/>
            <person name="Swiezewska E."/>
            <person name="Jae L.T."/>
            <person name="Brummelkamp T.R."/>
            <person name="Manya H."/>
            <person name="Endo T."/>
            <person name="van Bokhoven H."/>
            <person name="Yue W.W."/>
            <person name="Lefeber D.J."/>
        </authorList>
    </citation>
    <scope>X-RAY CRYSTALLOGRAPHY (2.39 ANGSTROMS) OF 43-451</scope>
    <scope>FUNCTION</scope>
    <scope>CATALYTIC ACTIVITY</scope>
    <scope>PATHWAY</scope>
    <scope>SUBCELLULAR LOCATION</scope>
    <scope>SUBUNIT</scope>
</reference>
<reference key="8">
    <citation type="journal article" date="2012" name="Am. J. Hum. Genet.">
        <title>Identification of mutations in TMEM5 and ISPD as a cause of severe cobblestone lissencephaly.</title>
        <authorList>
            <person name="Vuillaumier-Barrot S."/>
            <person name="Bouchet-Seraphin C."/>
            <person name="Chelbi M."/>
            <person name="Devisme L."/>
            <person name="Quentin S."/>
            <person name="Gazal S."/>
            <person name="Laquerriere A."/>
            <person name="Fallet-Bianco C."/>
            <person name="Loget P."/>
            <person name="Odent S."/>
            <person name="Carles D."/>
            <person name="Bazin A."/>
            <person name="Aziza J."/>
            <person name="Clemenson A."/>
            <person name="Guimiot F."/>
            <person name="Bonniere M."/>
            <person name="Monnot S."/>
            <person name="Bole-Feysot C."/>
            <person name="Bernard J.P."/>
            <person name="Loeuillet L."/>
            <person name="Gonzales M."/>
            <person name="Socha K."/>
            <person name="Grandchamp B."/>
            <person name="Attie-Bitach T."/>
            <person name="Encha-Razavi F."/>
            <person name="Seta N."/>
        </authorList>
    </citation>
    <scope>VARIANTS MDDGA7 ASN-156; ARG-213; HIS-226 AND ILE-238</scope>
</reference>
<reference key="9">
    <citation type="journal article" date="2012" name="Nat. Genet.">
        <title>Mutations in ISPD cause Walker-Warburg syndrome and defective glycosylation of alpha-dystroglycan.</title>
        <authorList>
            <person name="Roscioli T."/>
            <person name="Kamsteeg E.J."/>
            <person name="Buysse K."/>
            <person name="Maystadt I."/>
            <person name="van Reeuwijk J."/>
            <person name="van den Elzen C."/>
            <person name="van Beusekom E."/>
            <person name="Riemersma M."/>
            <person name="Pfundt R."/>
            <person name="Vissers L.E."/>
            <person name="Schraders M."/>
            <person name="Altunoglu U."/>
            <person name="Buckley M.F."/>
            <person name="Brunner H.G."/>
            <person name="Grisart B."/>
            <person name="Zhou H."/>
            <person name="Veltman J.A."/>
            <person name="Gilissen C."/>
            <person name="Mancini G.M."/>
            <person name="Delree P."/>
            <person name="Willemsen M.A."/>
            <person name="Ramadza D.P."/>
            <person name="Chitayat D."/>
            <person name="Bennett C."/>
            <person name="Sheridan E."/>
            <person name="Peeters E.A."/>
            <person name="Tan-Sindhunata G.M."/>
            <person name="de Die-Smulders C.E."/>
            <person name="Devriendt K."/>
            <person name="Kayserili H."/>
            <person name="El-Hashash O.A."/>
            <person name="Stemple D.L."/>
            <person name="Lefeber D.J."/>
            <person name="Lin Y.Y."/>
            <person name="van Bokhoven H."/>
        </authorList>
    </citation>
    <scope>VARIANTS MDDGA7 PRO-122; HIS-126 AND ASP-216</scope>
    <scope>FUNCTION</scope>
</reference>
<reference key="10">
    <citation type="journal article" date="2013" name="Brain">
        <title>ISPD gene mutations are a common cause of congenital and limb-girdle muscular dystrophies.</title>
        <authorList>
            <consortium name="UK10K Consortium"/>
            <person name="Cirak S."/>
            <person name="Foley A.R."/>
            <person name="Herrmann R."/>
            <person name="Willer T."/>
            <person name="Yau S."/>
            <person name="Stevens E."/>
            <person name="Torelli S."/>
            <person name="Brodd L."/>
            <person name="Kamynina A."/>
            <person name="Vondracek P."/>
            <person name="Roper H."/>
            <person name="Longman C."/>
            <person name="Korinthenberg R."/>
            <person name="Marrosu G."/>
            <person name="Nuernberg P."/>
            <person name="Michele D.E."/>
            <person name="Plagnol V."/>
            <person name="Hurles M."/>
            <person name="Moore S.A."/>
            <person name="Sewry C.A."/>
            <person name="Campbell K.P."/>
            <person name="Voit T."/>
            <person name="Muntoni F."/>
        </authorList>
    </citation>
    <scope>VARIANTS MDDGC7 THR-53; LEU-149; 215-GLN--ALA-451 DEL; CYS-226; VAL-372 DEL AND 395-ARG--ALA-451 DEL</scope>
    <scope>VARIANT MDDGA7 HIS-126</scope>
</reference>
<reference key="11">
    <citation type="journal article" date="2013" name="Eur. J. Med. Genet.">
        <title>160 kb deletion in ISPD unmasking a recessive mutation in a patient with Walker-Warburg syndrome.</title>
        <authorList>
            <person name="Czeschik J.C."/>
            <person name="Hehr U."/>
            <person name="Hartmann B."/>
            <person name="Luedecke H.J."/>
            <person name="Rosenbaum T."/>
            <person name="Schweiger B."/>
            <person name="Wieczorek D."/>
        </authorList>
    </citation>
    <scope>VARIANT MDDGA7 HIS-205</scope>
</reference>
<reference key="12">
    <citation type="journal article" date="2013" name="Neurology">
        <title>Limb-girdle muscular dystrophy with alpha-dystroglycan deficiency and mutations in the ISPD gene.</title>
        <authorList>
            <person name="Tasca G."/>
            <person name="Moro F."/>
            <person name="Aiello C."/>
            <person name="Cassandrini D."/>
            <person name="Fiorillo C."/>
            <person name="Bertini E."/>
            <person name="Bruno C."/>
            <person name="Santorelli F.M."/>
            <person name="Ricci E."/>
        </authorList>
    </citation>
    <scope>VARIANTS MDDGC7 ALA-54 AND VAL-372 DEL</scope>
    <scope>INVOLVEMENT IN MDDGC7</scope>
    <scope>CHARACTERIZATION OF VARIANTS MDDGC7 ALA-54 AND VAL-372 DEL</scope>
</reference>
<reference key="13">
    <citation type="journal article" date="2017" name="Clin. Genet.">
        <title>Improved diagnostic yield of neuromuscular disorders applying clinical exome sequencing in patients arising from a consanguineous population.</title>
        <authorList>
            <person name="Fattahi Z."/>
            <person name="Kalhor Z."/>
            <person name="Fadaee M."/>
            <person name="Vazehan R."/>
            <person name="Parsimehr E."/>
            <person name="Abolhassani A."/>
            <person name="Beheshtian M."/>
            <person name="Zamani G."/>
            <person name="Nafissi S."/>
            <person name="Nilipour Y."/>
            <person name="Akbari M.R."/>
            <person name="Kahrizi K."/>
            <person name="Kariminejad A."/>
            <person name="Najmabadi H."/>
        </authorList>
    </citation>
    <scope>VARIANT MDDGC7 VAL-372 DEL</scope>
</reference>
<gene>
    <name evidence="16" type="primary">CRPPA</name>
    <name evidence="16" type="synonym">ISPD</name>
</gene>
<proteinExistence type="evidence at protein level"/>
<keyword id="KW-0002">3D-structure</keyword>
<keyword id="KW-0025">Alternative splicing</keyword>
<keyword id="KW-0912">Congenital muscular dystrophy</keyword>
<keyword id="KW-0963">Cytoplasm</keyword>
<keyword id="KW-0225">Disease variant</keyword>
<keyword id="KW-1215">Dystroglycanopathy</keyword>
<keyword id="KW-0947">Limb-girdle muscular dystrophy</keyword>
<keyword id="KW-0451">Lissencephaly</keyword>
<keyword id="KW-0548">Nucleotidyltransferase</keyword>
<keyword id="KW-1267">Proteomics identification</keyword>
<keyword id="KW-1185">Reference proteome</keyword>
<keyword id="KW-0808">Transferase</keyword>
<comment type="function">
    <text evidence="3 4 9 10 11 13">Cytidylyltransferase required for protein O-linked mannosylation (PubMed:22522420, PubMed:22522421, PubMed:26687144, PubMed:26923585, PubMed:27130732, PubMed:27601598). Catalyzes the formation of CDP-ribitol nucleotide sugar from D-ribitol 5-phosphate (PubMed:26687144, PubMed:26923585, PubMed:27130732). CDP-ribitol is a substrate of FKTN during the biosynthesis of the phosphorylated O-mannosyl trisaccharide (N-acetylgalactosamine-beta-3-N-acetylglucosamine-beta-4-(phosphate-6-)mannose), a carbohydrate structure present in alpha-dystroglycan (DAG1), which is required for binding laminin G-like domain-containing extracellular proteins with high affinity (PubMed:26687144, PubMed:26923585, PubMed:27130732). Shows activity toward other pentose phosphate sugars and mediates formation of CDP-ribulose or CDP-ribose using CTP and ribulose-5-phosphate or ribose-5-phosphate, respectively (PubMed:26687144). Not Involved in dolichol production (PubMed:26687144).</text>
</comment>
<comment type="catalytic activity">
    <reaction evidence="9 10 11">
        <text>D-ribitol 5-phosphate + CTP + H(+) = CDP-L-ribitol + diphosphate</text>
        <dbReference type="Rhea" id="RHEA:12456"/>
        <dbReference type="ChEBI" id="CHEBI:15378"/>
        <dbReference type="ChEBI" id="CHEBI:33019"/>
        <dbReference type="ChEBI" id="CHEBI:37563"/>
        <dbReference type="ChEBI" id="CHEBI:57608"/>
        <dbReference type="ChEBI" id="CHEBI:57695"/>
        <dbReference type="EC" id="2.7.7.40"/>
    </reaction>
</comment>
<comment type="catalytic activity">
    <reaction evidence="9 11">
        <text>D-ribose 5-phosphate + CTP + H(+) = CDP-D-ribose + diphosphate</text>
        <dbReference type="Rhea" id="RHEA:53872"/>
        <dbReference type="ChEBI" id="CHEBI:15378"/>
        <dbReference type="ChEBI" id="CHEBI:33019"/>
        <dbReference type="ChEBI" id="CHEBI:37563"/>
        <dbReference type="ChEBI" id="CHEBI:78346"/>
        <dbReference type="ChEBI" id="CHEBI:137525"/>
    </reaction>
</comment>
<comment type="catalytic activity">
    <reaction evidence="9">
        <text>D-ribulose 5-phosphate + CTP + H(+) = CDP-D-ribulose + diphosphate</text>
        <dbReference type="Rhea" id="RHEA:53612"/>
        <dbReference type="ChEBI" id="CHEBI:15378"/>
        <dbReference type="ChEBI" id="CHEBI:33019"/>
        <dbReference type="ChEBI" id="CHEBI:37563"/>
        <dbReference type="ChEBI" id="CHEBI:58121"/>
        <dbReference type="ChEBI" id="CHEBI:137524"/>
    </reaction>
</comment>
<comment type="pathway">
    <text evidence="9 10 11">Protein modification; protein glycosylation.</text>
</comment>
<comment type="subunit">
    <text evidence="9">Homodimer.</text>
</comment>
<comment type="subcellular location">
    <subcellularLocation>
        <location evidence="9">Cytoplasm</location>
        <location evidence="9">Cytosol</location>
    </subcellularLocation>
</comment>
<comment type="alternative products">
    <event type="alternative splicing"/>
    <isoform>
        <id>A4D126-1</id>
        <name>1</name>
        <sequence type="displayed"/>
    </isoform>
    <isoform>
        <id>A4D126-2</id>
        <name>2</name>
        <sequence type="described" ref="VSP_044044"/>
    </isoform>
</comment>
<comment type="tissue specificity">
    <text evidence="3">Ubiquitously expressed, with high expression in brain.</text>
</comment>
<comment type="disease" evidence="3 4 5 6 8">
    <disease id="DI-03441">
        <name>Muscular dystrophy-dystroglycanopathy congenital with brain and eye anomalies A7</name>
        <acronym>MDDGA7</acronym>
        <description>An autosomal recessive disorder characterized by congenital muscular dystrophy associated with cobblestone lissencephaly and other brain anomalies, eye malformations, profound intellectual disability, and death usually in the first years of life. Included diseases are the more severe Walker-Warburg syndrome and the slightly less severe muscle-eye-brain disease.</description>
        <dbReference type="MIM" id="614643"/>
    </disease>
    <text>The disease is caused by variants affecting the gene represented in this entry.</text>
</comment>
<comment type="disease" evidence="6 7 12">
    <disease id="DI-04245">
        <name>Muscular dystrophy-dystroglycanopathy limb-girdle C7</name>
        <acronym>MDDGC7</acronym>
        <description>A form of muscular dystrophy resulting from defective glycosylation of alpha-dystroglycan, and characterized by a limb-girdle phenotype with muscular weakness apparent after ambulation is achieved. MDDGC7 individuals do not show epilepsy, intellectual disability, structural eye/brain abnormalities, or white matter changes.</description>
        <dbReference type="MIM" id="616052"/>
    </disease>
    <text>The disease is caused by variants affecting the gene represented in this entry.</text>
</comment>
<comment type="similarity">
    <text evidence="15">Belongs to the IspD/TarI cytidylyltransferase family. IspD subfamily.</text>
</comment>
<comment type="sequence caution" evidence="15">
    <conflict type="erroneous gene model prediction">
        <sequence resource="EMBL-CDS" id="EAL24288"/>
    </conflict>
</comment>